<protein>
    <recommendedName>
        <fullName evidence="11">Xyloglucan-specific galacturonosyltransferase 1</fullName>
        <ecNumber evidence="8">2.4.1.-</ecNumber>
    </recommendedName>
    <alternativeName>
        <fullName evidence="9">Glycosyltransferase 16</fullName>
    </alternativeName>
    <alternativeName>
        <fullName evidence="10">Protein ROOT HAIR SPECIFIC 8</fullName>
    </alternativeName>
    <alternativeName>
        <fullName evidence="10">Protein exostosin</fullName>
    </alternativeName>
</protein>
<sequence length="664" mass="76562">MSLSKHLQKLVHKRESKKQPNKKMPVSVSKLRRPRTSKKTETGNPEKTLKDPRTCCNNLFSIFSARSFLYRVPLTILFLFLIYLWSTSTTVISGNVVHICISSRKLTDLYCLTAGSQPALRAPVNNFTAPASEDVVTSKEEKNVFVLGKDGDKGFAENETFEGGKDSDKSTVGENLTINKNETFTGETSGERVSILNQDAKPIHEKNLDSVLDQDSLPKNEIDQDFIIDWDPETGEERYRYFKAKTEDEETGLKSTEEYIQIQRTWLSMGNNRKKPGSCEGKGVYVYDLPSKFNKDLLRECSDMVPWADFCNYFKNDAFGELMESMGKGWFRTHQYSLEPIFHSRILKHPCRVHNETQAKLFYVPFYGGMDVLRWHFKNVSSDVKDVLPIEIVKWLGSKKSWRKNSGKDHVFVLGKISWDFRRVDKYSWGSSLLEMQEMKNPTKLLIERNPWEVNDIAIPHPTYFHPKTDTDIAIWQNKILGKPRRSLISFAGAARPGNPESIRSILIDQCRSSPNQCRFLNCTDGGCDKSESVIELFRDSEFCLQPPGDSPTRKSIFDSLILGCIPVIFDPYSAYYQYTWHLPEDHRRYSVYINKEDVKLKRVNVIEKLMSKTLREREDMRSYIVHELLPGLVYGDSNAKFERFRDAFDITMDSLFKKIAKTV</sequence>
<proteinExistence type="evidence at transcript level"/>
<evidence type="ECO:0000250" key="1">
    <source>
        <dbReference type="UniProtKB" id="Q7XJ98"/>
    </source>
</evidence>
<evidence type="ECO:0000255" key="2"/>
<evidence type="ECO:0000255" key="3">
    <source>
        <dbReference type="PROSITE-ProRule" id="PRU00498"/>
    </source>
</evidence>
<evidence type="ECO:0000256" key="4">
    <source>
        <dbReference type="SAM" id="MobiDB-lite"/>
    </source>
</evidence>
<evidence type="ECO:0000269" key="5">
    <source>
    </source>
</evidence>
<evidence type="ECO:0000269" key="6">
    <source>
    </source>
</evidence>
<evidence type="ECO:0000269" key="7">
    <source>
    </source>
</evidence>
<evidence type="ECO:0000269" key="8">
    <source>
    </source>
</evidence>
<evidence type="ECO:0000303" key="9">
    <source>
    </source>
</evidence>
<evidence type="ECO:0000303" key="10">
    <source>
    </source>
</evidence>
<evidence type="ECO:0000303" key="11">
    <source>
    </source>
</evidence>
<evidence type="ECO:0000305" key="12"/>
<evidence type="ECO:0000312" key="13">
    <source>
        <dbReference type="EMBL" id="AAF19708.1"/>
    </source>
</evidence>
<evidence type="ECO:0000312" key="14">
    <source>
        <dbReference type="EMBL" id="AEE34101.1"/>
    </source>
</evidence>
<evidence type="ECO:0000312" key="15">
    <source>
        <dbReference type="Proteomes" id="UP000006548"/>
    </source>
</evidence>
<comment type="function">
    <text evidence="8">Xyloglucan-specific galacturonosyltransferase that forms the beta-D-galactosyluronic acid-(1-&gt;2)-alpha-D-xylosyl linkage. Required for root hair development probably by providing important acidic xyloglucans.</text>
</comment>
<comment type="subcellular location">
    <subcellularLocation>
        <location evidence="1">Golgi apparatus membrane</location>
        <topology evidence="1">Single-pass type II membrane protein</topology>
    </subcellularLocation>
</comment>
<comment type="tissue specificity">
    <text evidence="5 6 7">Root hair specific (PubMed:19448035, PubMed:22253603). Expressed in roots and young leaves (PubMed:15020758).</text>
</comment>
<comment type="disruption phenotype">
    <text evidence="8">Lacks acidic xyloglucan and has short root hairs.</text>
</comment>
<comment type="similarity">
    <text evidence="12">Belongs to the glycosyltransferase 47 family.</text>
</comment>
<organism evidence="15">
    <name type="scientific">Arabidopsis thaliana</name>
    <name type="common">Mouse-ear cress</name>
    <dbReference type="NCBI Taxonomy" id="3702"/>
    <lineage>
        <taxon>Eukaryota</taxon>
        <taxon>Viridiplantae</taxon>
        <taxon>Streptophyta</taxon>
        <taxon>Embryophyta</taxon>
        <taxon>Tracheophyta</taxon>
        <taxon>Spermatophyta</taxon>
        <taxon>Magnoliopsida</taxon>
        <taxon>eudicotyledons</taxon>
        <taxon>Gunneridae</taxon>
        <taxon>Pentapetalae</taxon>
        <taxon>rosids</taxon>
        <taxon>malvids</taxon>
        <taxon>Brassicales</taxon>
        <taxon>Brassicaceae</taxon>
        <taxon>Camelineae</taxon>
        <taxon>Arabidopsis</taxon>
    </lineage>
</organism>
<name>GT16_ARATH</name>
<gene>
    <name evidence="9" type="primary">GT16</name>
    <name evidence="10" type="synonym">RHS8</name>
    <name evidence="11" type="synonym">XUT1</name>
    <name evidence="14" type="ordered locus">At1g63450</name>
    <name evidence="13" type="ORF">F2K11.17</name>
</gene>
<feature type="chain" id="PRO_0000434272" description="Xyloglucan-specific galacturonosyltransferase 1">
    <location>
        <begin position="1"/>
        <end position="664"/>
    </location>
</feature>
<feature type="topological domain" description="Cytoplasmic" evidence="12">
    <location>
        <begin position="1"/>
        <end position="71"/>
    </location>
</feature>
<feature type="transmembrane region" description="Helical; Signal-anchor for type II membrane protein" evidence="2">
    <location>
        <begin position="72"/>
        <end position="92"/>
    </location>
</feature>
<feature type="topological domain" description="Lumenal" evidence="12">
    <location>
        <begin position="93"/>
        <end position="664"/>
    </location>
</feature>
<feature type="region of interest" description="Disordered" evidence="4">
    <location>
        <begin position="1"/>
        <end position="49"/>
    </location>
</feature>
<feature type="compositionally biased region" description="Basic residues" evidence="4">
    <location>
        <begin position="1"/>
        <end position="21"/>
    </location>
</feature>
<feature type="glycosylation site" description="N-linked (GlcNAc...) asparagine" evidence="3">
    <location>
        <position position="126"/>
    </location>
</feature>
<feature type="glycosylation site" description="N-linked (GlcNAc...) asparagine" evidence="3">
    <location>
        <position position="158"/>
    </location>
</feature>
<feature type="glycosylation site" description="N-linked (GlcNAc...) asparagine" evidence="3">
    <location>
        <position position="175"/>
    </location>
</feature>
<feature type="glycosylation site" description="N-linked (GlcNAc...) asparagine" evidence="3">
    <location>
        <position position="181"/>
    </location>
</feature>
<feature type="glycosylation site" description="N-linked (GlcNAc...) asparagine" evidence="3">
    <location>
        <position position="355"/>
    </location>
</feature>
<feature type="glycosylation site" description="N-linked (GlcNAc...) asparagine" evidence="3">
    <location>
        <position position="379"/>
    </location>
</feature>
<feature type="glycosylation site" description="N-linked (GlcNAc...) asparagine" evidence="3">
    <location>
        <position position="522"/>
    </location>
</feature>
<keyword id="KW-0325">Glycoprotein</keyword>
<keyword id="KW-0328">Glycosyltransferase</keyword>
<keyword id="KW-0333">Golgi apparatus</keyword>
<keyword id="KW-0472">Membrane</keyword>
<keyword id="KW-1185">Reference proteome</keyword>
<keyword id="KW-0735">Signal-anchor</keyword>
<keyword id="KW-0808">Transferase</keyword>
<keyword id="KW-0812">Transmembrane</keyword>
<keyword id="KW-1133">Transmembrane helix</keyword>
<accession>Q9SH31</accession>
<accession>Q0WLQ7</accession>
<reference key="1">
    <citation type="journal article" date="2014" name="Plant J.">
        <title>The plant glycosyltransferase clone collection for functional genomics.</title>
        <authorList>
            <person name="Lao J."/>
            <person name="Oikawa A."/>
            <person name="Bromley J.R."/>
            <person name="McInerney P."/>
            <person name="Suttangkakul A."/>
            <person name="Smith-Moritz A.M."/>
            <person name="Plahar H."/>
            <person name="Chiu T.-Y."/>
            <person name="Gonzalez Fernandez-Nino S.M.G."/>
            <person name="Ebert B."/>
            <person name="Yang F."/>
            <person name="Christiansen K.M."/>
            <person name="Hansen S.F."/>
            <person name="Stonebloom S."/>
            <person name="Adams P.D."/>
            <person name="Ronald P.C."/>
            <person name="Hillson N.J."/>
            <person name="Hadi M.Z."/>
            <person name="Vega-Sanchez M.E."/>
            <person name="Loque D."/>
            <person name="Scheller H.V."/>
            <person name="Heazlewood J.L."/>
        </authorList>
    </citation>
    <scope>NUCLEOTIDE SEQUENCE [MRNA]</scope>
    <scope>GENE FAMILY</scope>
    <source>
        <strain>cv. Columbia</strain>
    </source>
</reference>
<reference key="2">
    <citation type="journal article" date="2000" name="Nature">
        <title>Sequence and analysis of chromosome 1 of the plant Arabidopsis thaliana.</title>
        <authorList>
            <person name="Theologis A."/>
            <person name="Ecker J.R."/>
            <person name="Palm C.J."/>
            <person name="Federspiel N.A."/>
            <person name="Kaul S."/>
            <person name="White O."/>
            <person name="Alonso J."/>
            <person name="Altafi H."/>
            <person name="Araujo R."/>
            <person name="Bowman C.L."/>
            <person name="Brooks S.Y."/>
            <person name="Buehler E."/>
            <person name="Chan A."/>
            <person name="Chao Q."/>
            <person name="Chen H."/>
            <person name="Cheuk R.F."/>
            <person name="Chin C.W."/>
            <person name="Chung M.K."/>
            <person name="Conn L."/>
            <person name="Conway A.B."/>
            <person name="Conway A.R."/>
            <person name="Creasy T.H."/>
            <person name="Dewar K."/>
            <person name="Dunn P."/>
            <person name="Etgu P."/>
            <person name="Feldblyum T.V."/>
            <person name="Feng J.-D."/>
            <person name="Fong B."/>
            <person name="Fujii C.Y."/>
            <person name="Gill J.E."/>
            <person name="Goldsmith A.D."/>
            <person name="Haas B."/>
            <person name="Hansen N.F."/>
            <person name="Hughes B."/>
            <person name="Huizar L."/>
            <person name="Hunter J.L."/>
            <person name="Jenkins J."/>
            <person name="Johnson-Hopson C."/>
            <person name="Khan S."/>
            <person name="Khaykin E."/>
            <person name="Kim C.J."/>
            <person name="Koo H.L."/>
            <person name="Kremenetskaia I."/>
            <person name="Kurtz D.B."/>
            <person name="Kwan A."/>
            <person name="Lam B."/>
            <person name="Langin-Hooper S."/>
            <person name="Lee A."/>
            <person name="Lee J.M."/>
            <person name="Lenz C.A."/>
            <person name="Li J.H."/>
            <person name="Li Y.-P."/>
            <person name="Lin X."/>
            <person name="Liu S.X."/>
            <person name="Liu Z.A."/>
            <person name="Luros J.S."/>
            <person name="Maiti R."/>
            <person name="Marziali A."/>
            <person name="Militscher J."/>
            <person name="Miranda M."/>
            <person name="Nguyen M."/>
            <person name="Nierman W.C."/>
            <person name="Osborne B.I."/>
            <person name="Pai G."/>
            <person name="Peterson J."/>
            <person name="Pham P.K."/>
            <person name="Rizzo M."/>
            <person name="Rooney T."/>
            <person name="Rowley D."/>
            <person name="Sakano H."/>
            <person name="Salzberg S.L."/>
            <person name="Schwartz J.R."/>
            <person name="Shinn P."/>
            <person name="Southwick A.M."/>
            <person name="Sun H."/>
            <person name="Tallon L.J."/>
            <person name="Tambunga G."/>
            <person name="Toriumi M.J."/>
            <person name="Town C.D."/>
            <person name="Utterback T."/>
            <person name="Van Aken S."/>
            <person name="Vaysberg M."/>
            <person name="Vysotskaia V.S."/>
            <person name="Walker M."/>
            <person name="Wu D."/>
            <person name="Yu G."/>
            <person name="Fraser C.M."/>
            <person name="Venter J.C."/>
            <person name="Davis R.W."/>
        </authorList>
    </citation>
    <scope>NUCLEOTIDE SEQUENCE [LARGE SCALE GENOMIC DNA]</scope>
    <source>
        <strain>cv. Columbia</strain>
    </source>
</reference>
<reference key="3">
    <citation type="journal article" date="2017" name="Plant J.">
        <title>Araport11: a complete reannotation of the Arabidopsis thaliana reference genome.</title>
        <authorList>
            <person name="Cheng C.Y."/>
            <person name="Krishnakumar V."/>
            <person name="Chan A.P."/>
            <person name="Thibaud-Nissen F."/>
            <person name="Schobel S."/>
            <person name="Town C.D."/>
        </authorList>
    </citation>
    <scope>GENOME REANNOTATION</scope>
    <source>
        <strain>cv. Columbia</strain>
    </source>
</reference>
<reference key="4">
    <citation type="submission" date="2006-07" db="EMBL/GenBank/DDBJ databases">
        <title>Large-scale analysis of RIKEN Arabidopsis full-length (RAFL) cDNAs.</title>
        <authorList>
            <person name="Totoki Y."/>
            <person name="Seki M."/>
            <person name="Ishida J."/>
            <person name="Nakajima M."/>
            <person name="Enju A."/>
            <person name="Kamiya A."/>
            <person name="Narusaka M."/>
            <person name="Shin-i T."/>
            <person name="Nakagawa M."/>
            <person name="Sakamoto N."/>
            <person name="Oishi K."/>
            <person name="Kohara Y."/>
            <person name="Kobayashi M."/>
            <person name="Toyoda A."/>
            <person name="Sakaki Y."/>
            <person name="Sakurai T."/>
            <person name="Iida K."/>
            <person name="Akiyama K."/>
            <person name="Satou M."/>
            <person name="Toyoda T."/>
            <person name="Konagaya A."/>
            <person name="Carninci P."/>
            <person name="Kawai J."/>
            <person name="Hayashizaki Y."/>
            <person name="Shinozaki K."/>
        </authorList>
    </citation>
    <scope>NUCLEOTIDE SEQUENCE [LARGE SCALE MRNA] OF 1-229</scope>
    <source>
        <strain>cv. Columbia</strain>
    </source>
</reference>
<reference key="5">
    <citation type="journal article" date="2004" name="Plant Physiol.">
        <title>Molecular analysis of 10 coding regions from Arabidopsis that are homologous to the MUR3 xyloglucan galactosyltransferase.</title>
        <authorList>
            <person name="Li X."/>
            <person name="Cordero I."/>
            <person name="Caplan J."/>
            <person name="Moelhoej M."/>
            <person name="Reiter W.D."/>
        </authorList>
    </citation>
    <scope>TISSUE SPECIFICITY</scope>
</reference>
<reference key="6">
    <citation type="journal article" date="2009" name="Plant Physiol.">
        <title>Cis-element- and transcriptome-based screening of root hair-specific genes and their functional characterization in Arabidopsis.</title>
        <authorList>
            <person name="Won S.-K."/>
            <person name="Lee Y.-J."/>
            <person name="Lee H.-Y."/>
            <person name="Heo Y.-K."/>
            <person name="Cho M."/>
            <person name="Cho H.-T."/>
        </authorList>
    </citation>
    <scope>TISSUE SPECIFICITY</scope>
    <scope>GENE FAMILY</scope>
    <scope>NOMENCLATURE</scope>
</reference>
<reference key="7">
    <citation type="journal article" date="2012" name="Plant Cell">
        <title>A galacturonic acid-containing xyloglucan is involved in Arabidopsis root hair tip growth.</title>
        <authorList>
            <person name="Pena M.J."/>
            <person name="Kong Y."/>
            <person name="York W.S."/>
            <person name="O'Neill M.A."/>
        </authorList>
    </citation>
    <scope>FUNCTION</scope>
    <scope>DISRUPTION PHENOTYPE</scope>
    <source>
        <strain>cv. Columbia</strain>
    </source>
</reference>
<reference key="8">
    <citation type="journal article" date="2012" name="PLoS Genet.">
        <title>A gene regulatory network for root epidermis cell differentiation in Arabidopsis.</title>
        <authorList>
            <person name="Bruex A."/>
            <person name="Kainkaryam R.M."/>
            <person name="Wieckowski Y."/>
            <person name="Kang Y.H."/>
            <person name="Bernhardt C."/>
            <person name="Xia Y."/>
            <person name="Zheng X."/>
            <person name="Wang J.Y."/>
            <person name="Lee M.M."/>
            <person name="Benfey P."/>
            <person name="Woolf P.J."/>
            <person name="Schiefelbein J."/>
        </authorList>
    </citation>
    <scope>TISSUE SPECIFICITY</scope>
</reference>
<dbReference type="EC" id="2.4.1.-" evidence="8"/>
<dbReference type="EMBL" id="KJ138954">
    <property type="protein sequence ID" value="AHL38894.1"/>
    <property type="molecule type" value="mRNA"/>
</dbReference>
<dbReference type="EMBL" id="AC008047">
    <property type="protein sequence ID" value="AAF19708.1"/>
    <property type="molecule type" value="Genomic_DNA"/>
</dbReference>
<dbReference type="EMBL" id="CP002684">
    <property type="protein sequence ID" value="AEE34101.1"/>
    <property type="molecule type" value="Genomic_DNA"/>
</dbReference>
<dbReference type="EMBL" id="AK230135">
    <property type="protein sequence ID" value="BAF01950.1"/>
    <property type="molecule type" value="mRNA"/>
</dbReference>
<dbReference type="RefSeq" id="NP_176534.2">
    <property type="nucleotide sequence ID" value="NM_105024.4"/>
</dbReference>
<dbReference type="STRING" id="3702.Q9SH31"/>
<dbReference type="CAZy" id="GT47">
    <property type="family name" value="Glycosyltransferase Family 47"/>
</dbReference>
<dbReference type="GlyCosmos" id="Q9SH31">
    <property type="glycosylation" value="7 sites, No reported glycans"/>
</dbReference>
<dbReference type="GlyGen" id="Q9SH31">
    <property type="glycosylation" value="7 sites"/>
</dbReference>
<dbReference type="iPTMnet" id="Q9SH31"/>
<dbReference type="PaxDb" id="3702-AT1G63450.1"/>
<dbReference type="ProteomicsDB" id="247301"/>
<dbReference type="EnsemblPlants" id="AT1G63450.1">
    <property type="protein sequence ID" value="AT1G63450.1"/>
    <property type="gene ID" value="AT1G63450"/>
</dbReference>
<dbReference type="GeneID" id="842651"/>
<dbReference type="Gramene" id="AT1G63450.1">
    <property type="protein sequence ID" value="AT1G63450.1"/>
    <property type="gene ID" value="AT1G63450"/>
</dbReference>
<dbReference type="KEGG" id="ath:AT1G63450"/>
<dbReference type="Araport" id="AT1G63450"/>
<dbReference type="TAIR" id="AT1G63450">
    <property type="gene designation" value="RHS8"/>
</dbReference>
<dbReference type="eggNOG" id="KOG1021">
    <property type="taxonomic scope" value="Eukaryota"/>
</dbReference>
<dbReference type="HOGENOM" id="CLU_012659_1_0_1"/>
<dbReference type="InParanoid" id="Q9SH31"/>
<dbReference type="OMA" id="YHTHQYS"/>
<dbReference type="PhylomeDB" id="Q9SH31"/>
<dbReference type="PRO" id="PR:Q9SH31"/>
<dbReference type="Proteomes" id="UP000006548">
    <property type="component" value="Chromosome 1"/>
</dbReference>
<dbReference type="ExpressionAtlas" id="Q9SH31">
    <property type="expression patterns" value="baseline and differential"/>
</dbReference>
<dbReference type="GO" id="GO:0000139">
    <property type="term" value="C:Golgi membrane"/>
    <property type="evidence" value="ECO:0007669"/>
    <property type="project" value="UniProtKB-SubCell"/>
</dbReference>
<dbReference type="GO" id="GO:0016757">
    <property type="term" value="F:glycosyltransferase activity"/>
    <property type="evidence" value="ECO:0000315"/>
    <property type="project" value="TAIR"/>
</dbReference>
<dbReference type="GO" id="GO:0042546">
    <property type="term" value="P:cell wall biogenesis"/>
    <property type="evidence" value="ECO:0000315"/>
    <property type="project" value="TAIR"/>
</dbReference>
<dbReference type="GO" id="GO:0000271">
    <property type="term" value="P:polysaccharide biosynthetic process"/>
    <property type="evidence" value="ECO:0000315"/>
    <property type="project" value="TAIR"/>
</dbReference>
<dbReference type="GO" id="GO:0006486">
    <property type="term" value="P:protein glycosylation"/>
    <property type="evidence" value="ECO:0007669"/>
    <property type="project" value="InterPro"/>
</dbReference>
<dbReference type="GO" id="GO:0048767">
    <property type="term" value="P:root hair elongation"/>
    <property type="evidence" value="ECO:0000315"/>
    <property type="project" value="TAIR"/>
</dbReference>
<dbReference type="InterPro" id="IPR004263">
    <property type="entry name" value="Exostosin"/>
</dbReference>
<dbReference type="InterPro" id="IPR040911">
    <property type="entry name" value="Exostosin_GT47"/>
</dbReference>
<dbReference type="PANTHER" id="PTHR11062">
    <property type="entry name" value="EXOSTOSIN HEPARAN SULFATE GLYCOSYLTRANSFERASE -RELATED"/>
    <property type="match status" value="1"/>
</dbReference>
<dbReference type="PANTHER" id="PTHR11062:SF117">
    <property type="entry name" value="XYLOGLUCAN-SPECIFIC GALACTURONOSYLTRANSFERASE 1"/>
    <property type="match status" value="1"/>
</dbReference>
<dbReference type="Pfam" id="PF03016">
    <property type="entry name" value="Exostosin_GT47"/>
    <property type="match status" value="1"/>
</dbReference>